<feature type="chain" id="PRO_0000217045" description="Holin-like protein CidB">
    <location>
        <begin position="1"/>
        <end position="229"/>
    </location>
</feature>
<feature type="transmembrane region" description="Helical" evidence="2">
    <location>
        <begin position="4"/>
        <end position="21"/>
    </location>
</feature>
<feature type="transmembrane region" description="Helical" evidence="2">
    <location>
        <begin position="30"/>
        <end position="52"/>
    </location>
</feature>
<feature type="transmembrane region" description="Helical" evidence="2">
    <location>
        <begin position="62"/>
        <end position="79"/>
    </location>
</feature>
<feature type="transmembrane region" description="Helical" evidence="2">
    <location>
        <begin position="90"/>
        <end position="112"/>
    </location>
</feature>
<feature type="transmembrane region" description="Helical" evidence="2">
    <location>
        <begin position="149"/>
        <end position="171"/>
    </location>
</feature>
<feature type="transmembrane region" description="Helical" evidence="2">
    <location>
        <begin position="204"/>
        <end position="226"/>
    </location>
</feature>
<accession>P60637</accession>
<accession>Q99R95</accession>
<evidence type="ECO:0000250" key="1"/>
<evidence type="ECO:0000255" key="2"/>
<evidence type="ECO:0000305" key="3"/>
<reference key="1">
    <citation type="journal article" date="2001" name="Lancet">
        <title>Whole genome sequencing of meticillin-resistant Staphylococcus aureus.</title>
        <authorList>
            <person name="Kuroda M."/>
            <person name="Ohta T."/>
            <person name="Uchiyama I."/>
            <person name="Baba T."/>
            <person name="Yuzawa H."/>
            <person name="Kobayashi I."/>
            <person name="Cui L."/>
            <person name="Oguchi A."/>
            <person name="Aoki K."/>
            <person name="Nagai Y."/>
            <person name="Lian J.-Q."/>
            <person name="Ito T."/>
            <person name="Kanamori M."/>
            <person name="Matsumaru H."/>
            <person name="Maruyama A."/>
            <person name="Murakami H."/>
            <person name="Hosoyama A."/>
            <person name="Mizutani-Ui Y."/>
            <person name="Takahashi N.K."/>
            <person name="Sawano T."/>
            <person name="Inoue R."/>
            <person name="Kaito C."/>
            <person name="Sekimizu K."/>
            <person name="Hirakawa H."/>
            <person name="Kuhara S."/>
            <person name="Goto S."/>
            <person name="Yabuzaki J."/>
            <person name="Kanehisa M."/>
            <person name="Yamashita A."/>
            <person name="Oshima K."/>
            <person name="Furuya K."/>
            <person name="Yoshino C."/>
            <person name="Shiba T."/>
            <person name="Hattori M."/>
            <person name="Ogasawara N."/>
            <person name="Hayashi H."/>
            <person name="Hiramatsu K."/>
        </authorList>
    </citation>
    <scope>NUCLEOTIDE SEQUENCE [LARGE SCALE GENOMIC DNA]</scope>
    <source>
        <strain>Mu50 / ATCC 700699</strain>
    </source>
</reference>
<proteinExistence type="inferred from homology"/>
<name>CIDB_STAAM</name>
<gene>
    <name type="primary">cidB</name>
    <name type="ordered locus">SAV2540</name>
</gene>
<dbReference type="EMBL" id="BA000017">
    <property type="protein sequence ID" value="BAB58702.1"/>
    <property type="molecule type" value="Genomic_DNA"/>
</dbReference>
<dbReference type="RefSeq" id="WP_001001019.1">
    <property type="nucleotide sequence ID" value="NC_002758.2"/>
</dbReference>
<dbReference type="KEGG" id="sav:SAV2540"/>
<dbReference type="HOGENOM" id="CLU_082099_3_0_9"/>
<dbReference type="PhylomeDB" id="P60637"/>
<dbReference type="Proteomes" id="UP000002481">
    <property type="component" value="Chromosome"/>
</dbReference>
<dbReference type="GO" id="GO:0005886">
    <property type="term" value="C:plasma membrane"/>
    <property type="evidence" value="ECO:0007669"/>
    <property type="project" value="UniProtKB-SubCell"/>
</dbReference>
<dbReference type="GO" id="GO:0031640">
    <property type="term" value="P:killing of cells of another organism"/>
    <property type="evidence" value="ECO:0007669"/>
    <property type="project" value="UniProtKB-KW"/>
</dbReference>
<dbReference type="InterPro" id="IPR007300">
    <property type="entry name" value="CidB/LrgB"/>
</dbReference>
<dbReference type="PANTHER" id="PTHR30249:SF17">
    <property type="entry name" value="HOLIN-LIKE PROTEIN CIDB"/>
    <property type="match status" value="1"/>
</dbReference>
<dbReference type="PANTHER" id="PTHR30249">
    <property type="entry name" value="PUTATIVE SEROTONIN TRANSPORTER"/>
    <property type="match status" value="1"/>
</dbReference>
<dbReference type="Pfam" id="PF04172">
    <property type="entry name" value="LrgB"/>
    <property type="match status" value="1"/>
</dbReference>
<sequence length="229" mass="25012">MNDYVQALLMILLTVVLYYFAKRLQQKYPNPFLNPALIASLGIIFVLLIFGISYNGYMKGGSWINHILNATVVCLAYPLYKNREKIKDNVSIIFASVLTGVMLNFMLVFLTLKAFGYSKDVIVTLLPRSITAAVGIEVSHELGGTDTMTVLFIITTGLIGSILGSMLLRFGRFESSIAKGLTYGNASHAFGTAKALEMDIESGAFSSIGMILTAVISSVLIPVLILLFY</sequence>
<comment type="function">
    <text evidence="1">Increases the activity of extracellular murein hydrolases possibly by mediating their export via hole formation. Inhibited by the antiholin-like proteins LrgAB. In an unstressed cell, the LrgAB products probably inhibit the function of the CidAB proteins. When a cell is stressed by the addition of antibiotics or by other factors in the environment, the CidAB proteins possibly oligomerize within the bacterial cell membrane, creating lesions that disrupt the proton motive force, which in turn results in loss of cell viability. These lesions are also hypothesized to regulate the subsequent cell lysis by either allowing the murein hydrolases access to the cell wall substrate and/or regulating their activity by a possible change in the cell wall pH that results from loss of membrane potential (By similarity).</text>
</comment>
<comment type="subcellular location">
    <subcellularLocation>
        <location evidence="3">Cell membrane</location>
        <topology evidence="3">Multi-pass membrane protein</topology>
    </subcellularLocation>
</comment>
<comment type="similarity">
    <text evidence="3">Belongs to the CidB/LrgB family. CidB subfamily.</text>
</comment>
<keyword id="KW-1003">Cell membrane</keyword>
<keyword id="KW-0204">Cytolysis</keyword>
<keyword id="KW-0472">Membrane</keyword>
<keyword id="KW-0812">Transmembrane</keyword>
<keyword id="KW-1133">Transmembrane helix</keyword>
<organism>
    <name type="scientific">Staphylococcus aureus (strain Mu50 / ATCC 700699)</name>
    <dbReference type="NCBI Taxonomy" id="158878"/>
    <lineage>
        <taxon>Bacteria</taxon>
        <taxon>Bacillati</taxon>
        <taxon>Bacillota</taxon>
        <taxon>Bacilli</taxon>
        <taxon>Bacillales</taxon>
        <taxon>Staphylococcaceae</taxon>
        <taxon>Staphylococcus</taxon>
    </lineage>
</organism>
<protein>
    <recommendedName>
        <fullName>Holin-like protein CidB</fullName>
    </recommendedName>
</protein>